<dbReference type="EC" id="3.4.16.4" evidence="1"/>
<dbReference type="EMBL" id="CP001127">
    <property type="protein sequence ID" value="ACF92671.1"/>
    <property type="molecule type" value="Genomic_DNA"/>
</dbReference>
<dbReference type="SMR" id="B4TR50"/>
<dbReference type="MEROPS" id="S12.A03"/>
<dbReference type="KEGG" id="sew:SeSA_A2711"/>
<dbReference type="HOGENOM" id="CLU_020027_1_2_6"/>
<dbReference type="Proteomes" id="UP000001865">
    <property type="component" value="Chromosome"/>
</dbReference>
<dbReference type="GO" id="GO:0005886">
    <property type="term" value="C:plasma membrane"/>
    <property type="evidence" value="ECO:0007669"/>
    <property type="project" value="UniProtKB-SubCell"/>
</dbReference>
<dbReference type="GO" id="GO:0009002">
    <property type="term" value="F:serine-type D-Ala-D-Ala carboxypeptidase activity"/>
    <property type="evidence" value="ECO:0007669"/>
    <property type="project" value="UniProtKB-UniRule"/>
</dbReference>
<dbReference type="GO" id="GO:0006508">
    <property type="term" value="P:proteolysis"/>
    <property type="evidence" value="ECO:0007669"/>
    <property type="project" value="UniProtKB-KW"/>
</dbReference>
<dbReference type="Gene3D" id="3.40.710.10">
    <property type="entry name" value="DD-peptidase/beta-lactamase superfamily"/>
    <property type="match status" value="1"/>
</dbReference>
<dbReference type="HAMAP" id="MF_01034">
    <property type="entry name" value="S12_YfeW"/>
    <property type="match status" value="1"/>
</dbReference>
<dbReference type="InterPro" id="IPR001466">
    <property type="entry name" value="Beta-lactam-related"/>
</dbReference>
<dbReference type="InterPro" id="IPR012338">
    <property type="entry name" value="Beta-lactam/transpept-like"/>
</dbReference>
<dbReference type="InterPro" id="IPR050789">
    <property type="entry name" value="Diverse_Enzym_Activities"/>
</dbReference>
<dbReference type="InterPro" id="IPR022849">
    <property type="entry name" value="Pept_S12_YfeW/YbbE-like"/>
</dbReference>
<dbReference type="NCBIfam" id="NF002968">
    <property type="entry name" value="PRK03642.1"/>
    <property type="match status" value="1"/>
</dbReference>
<dbReference type="PANTHER" id="PTHR43283">
    <property type="entry name" value="BETA-LACTAMASE-RELATED"/>
    <property type="match status" value="1"/>
</dbReference>
<dbReference type="PANTHER" id="PTHR43283:SF11">
    <property type="entry name" value="BETA-LACTAMASE-RELATED DOMAIN-CONTAINING PROTEIN"/>
    <property type="match status" value="1"/>
</dbReference>
<dbReference type="Pfam" id="PF00144">
    <property type="entry name" value="Beta-lactamase"/>
    <property type="match status" value="1"/>
</dbReference>
<dbReference type="SUPFAM" id="SSF56601">
    <property type="entry name" value="beta-lactamase/transpeptidase-like"/>
    <property type="match status" value="1"/>
</dbReference>
<accession>B4TR50</accession>
<organism>
    <name type="scientific">Salmonella schwarzengrund (strain CVM19633)</name>
    <dbReference type="NCBI Taxonomy" id="439843"/>
    <lineage>
        <taxon>Bacteria</taxon>
        <taxon>Pseudomonadati</taxon>
        <taxon>Pseudomonadota</taxon>
        <taxon>Gammaproteobacteria</taxon>
        <taxon>Enterobacterales</taxon>
        <taxon>Enterobacteriaceae</taxon>
        <taxon>Salmonella</taxon>
    </lineage>
</organism>
<protein>
    <recommendedName>
        <fullName evidence="1">Putative D-alanyl-D-alanine carboxypeptidase</fullName>
        <ecNumber evidence="1">3.4.16.4</ecNumber>
    </recommendedName>
    <alternativeName>
        <fullName evidence="1">DD-carboxypeptidase</fullName>
        <shortName evidence="1">DD-CPase</shortName>
    </alternativeName>
</protein>
<name>YFEW_SALSV</name>
<sequence length="432" mass="47712">MKFTLVATVLLTFSLSAFAVEYPVLTTASPDQVGFDSQKLHRLDGWIQNQIDAGYPSINLLVIKDNHIVLQKAWGYAKKYDGSTLLAHPIRATTNTMYDLASNTKMYATNFALQKLVYEGKIDVNDLVSKYIPGFKDMPGDKIKGKDKLRIIDILHHVAGFPADPQYPNKNVAGKLFSQSKSTTLEMIKKTPLEYQPGSKHIYSDVDYMILGFIVESITAMPLDRYVETTIYKPLGLKHTVFNPLMKGFTPPQIAATELHGNTRDGVIHFPNIRTNTLWGQVHDEKAWYSMGGVSGHAGLFSDTHDMAVLMQVMLNGGGYGNVKLFDDKTVAQFTRRSPEDATFGLGWRVNGNASMTPTFGVLASPQTYGHTGWTGTLTSIDPVNHMAIVILGNRPHSPVANPKVNPNVFVSGLLPAATYGWIVDRIYGSLK</sequence>
<comment type="catalytic activity">
    <reaction evidence="1">
        <text>Preferential cleavage: (Ac)2-L-Lys-D-Ala-|-D-Ala. Also transpeptidation of peptidyl-alanyl moieties that are N-acyl substituents of D-alanine.</text>
        <dbReference type="EC" id="3.4.16.4"/>
    </reaction>
</comment>
<comment type="subcellular location">
    <subcellularLocation>
        <location evidence="1">Cell inner membrane</location>
        <topology evidence="1">Single-pass membrane protein</topology>
    </subcellularLocation>
</comment>
<comment type="similarity">
    <text evidence="1">Belongs to the peptidase S12 family. YfeW subfamily.</text>
</comment>
<evidence type="ECO:0000255" key="1">
    <source>
        <dbReference type="HAMAP-Rule" id="MF_01034"/>
    </source>
</evidence>
<feature type="chain" id="PRO_1000149448" description="Putative D-alanyl-D-alanine carboxypeptidase">
    <location>
        <begin position="1"/>
        <end position="432"/>
    </location>
</feature>
<feature type="transmembrane region" description="Helical; Signal-anchor" evidence="1">
    <location>
        <begin position="7"/>
        <end position="25"/>
    </location>
</feature>
<proteinExistence type="inferred from homology"/>
<reference key="1">
    <citation type="journal article" date="2011" name="J. Bacteriol.">
        <title>Comparative genomics of 28 Salmonella enterica isolates: evidence for CRISPR-mediated adaptive sublineage evolution.</title>
        <authorList>
            <person name="Fricke W.F."/>
            <person name="Mammel M.K."/>
            <person name="McDermott P.F."/>
            <person name="Tartera C."/>
            <person name="White D.G."/>
            <person name="Leclerc J.E."/>
            <person name="Ravel J."/>
            <person name="Cebula T.A."/>
        </authorList>
    </citation>
    <scope>NUCLEOTIDE SEQUENCE [LARGE SCALE GENOMIC DNA]</scope>
    <source>
        <strain>CVM19633</strain>
    </source>
</reference>
<keyword id="KW-0121">Carboxypeptidase</keyword>
<keyword id="KW-0997">Cell inner membrane</keyword>
<keyword id="KW-1003">Cell membrane</keyword>
<keyword id="KW-0378">Hydrolase</keyword>
<keyword id="KW-0472">Membrane</keyword>
<keyword id="KW-0645">Protease</keyword>
<keyword id="KW-0812">Transmembrane</keyword>
<keyword id="KW-1133">Transmembrane helix</keyword>
<gene>
    <name evidence="1" type="primary">yfeW</name>
    <name type="ordered locus">SeSA_A2711</name>
</gene>